<reference key="1">
    <citation type="journal article" date="2005" name="Nucleic Acids Res.">
        <title>Genome dynamics and diversity of Shigella species, the etiologic agents of bacillary dysentery.</title>
        <authorList>
            <person name="Yang F."/>
            <person name="Yang J."/>
            <person name="Zhang X."/>
            <person name="Chen L."/>
            <person name="Jiang Y."/>
            <person name="Yan Y."/>
            <person name="Tang X."/>
            <person name="Wang J."/>
            <person name="Xiong Z."/>
            <person name="Dong J."/>
            <person name="Xue Y."/>
            <person name="Zhu Y."/>
            <person name="Xu X."/>
            <person name="Sun L."/>
            <person name="Chen S."/>
            <person name="Nie H."/>
            <person name="Peng J."/>
            <person name="Xu J."/>
            <person name="Wang Y."/>
            <person name="Yuan Z."/>
            <person name="Wen Y."/>
            <person name="Yao Z."/>
            <person name="Shen Y."/>
            <person name="Qiang B."/>
            <person name="Hou Y."/>
            <person name="Yu J."/>
            <person name="Jin Q."/>
        </authorList>
    </citation>
    <scope>NUCLEOTIDE SEQUENCE [LARGE SCALE GENOMIC DNA]</scope>
    <source>
        <strain>Ss046</strain>
    </source>
</reference>
<keyword id="KW-0963">Cytoplasm</keyword>
<keyword id="KW-0238">DNA-binding</keyword>
<keyword id="KW-0275">Fatty acid biosynthesis</keyword>
<keyword id="KW-0276">Fatty acid metabolism</keyword>
<keyword id="KW-0444">Lipid biosynthesis</keyword>
<keyword id="KW-0443">Lipid metabolism</keyword>
<keyword id="KW-1185">Reference proteome</keyword>
<keyword id="KW-0678">Repressor</keyword>
<keyword id="KW-0804">Transcription</keyword>
<keyword id="KW-0805">Transcription regulation</keyword>
<dbReference type="EMBL" id="CP000038">
    <property type="protein sequence ID" value="AAZ90649.1"/>
    <property type="status" value="ALT_INIT"/>
    <property type="molecule type" value="Genomic_DNA"/>
</dbReference>
<dbReference type="SMR" id="Q3YV13"/>
<dbReference type="KEGG" id="ssn:SSON_4136"/>
<dbReference type="HOGENOM" id="CLU_081861_0_0_6"/>
<dbReference type="Proteomes" id="UP000002529">
    <property type="component" value="Chromosome"/>
</dbReference>
<dbReference type="GO" id="GO:0005737">
    <property type="term" value="C:cytoplasm"/>
    <property type="evidence" value="ECO:0007669"/>
    <property type="project" value="UniProtKB-SubCell"/>
</dbReference>
<dbReference type="GO" id="GO:0003677">
    <property type="term" value="F:DNA binding"/>
    <property type="evidence" value="ECO:0007669"/>
    <property type="project" value="UniProtKB-KW"/>
</dbReference>
<dbReference type="GO" id="GO:0003700">
    <property type="term" value="F:DNA-binding transcription factor activity"/>
    <property type="evidence" value="ECO:0007669"/>
    <property type="project" value="UniProtKB-UniRule"/>
</dbReference>
<dbReference type="GO" id="GO:0006633">
    <property type="term" value="P:fatty acid biosynthetic process"/>
    <property type="evidence" value="ECO:0007669"/>
    <property type="project" value="UniProtKB-UniRule"/>
</dbReference>
<dbReference type="GO" id="GO:0045717">
    <property type="term" value="P:negative regulation of fatty acid biosynthetic process"/>
    <property type="evidence" value="ECO:0007669"/>
    <property type="project" value="UniProtKB-UniRule"/>
</dbReference>
<dbReference type="FunFam" id="1.10.10.60:FF:000034">
    <property type="entry name" value="HTH-type transcriptional repressor FabR"/>
    <property type="match status" value="1"/>
</dbReference>
<dbReference type="FunFam" id="1.10.357.10:FF:000001">
    <property type="entry name" value="HTH-type transcriptional repressor FabR"/>
    <property type="match status" value="1"/>
</dbReference>
<dbReference type="Gene3D" id="1.10.10.60">
    <property type="entry name" value="Homeodomain-like"/>
    <property type="match status" value="1"/>
</dbReference>
<dbReference type="Gene3D" id="1.10.357.10">
    <property type="entry name" value="Tetracycline Repressor, domain 2"/>
    <property type="match status" value="1"/>
</dbReference>
<dbReference type="HAMAP" id="MF_01190">
    <property type="entry name" value="HTH_type_FabR"/>
    <property type="match status" value="1"/>
</dbReference>
<dbReference type="InterPro" id="IPR054129">
    <property type="entry name" value="DesT_TetR_C"/>
</dbReference>
<dbReference type="InterPro" id="IPR009057">
    <property type="entry name" value="Homeodomain-like_sf"/>
</dbReference>
<dbReference type="InterPro" id="IPR001647">
    <property type="entry name" value="HTH_TetR"/>
</dbReference>
<dbReference type="InterPro" id="IPR050692">
    <property type="entry name" value="HTH_transcr_repressor_FabR"/>
</dbReference>
<dbReference type="InterPro" id="IPR023764">
    <property type="entry name" value="Tscrpt_reg_HTH_FabR"/>
</dbReference>
<dbReference type="NCBIfam" id="NF008402">
    <property type="entry name" value="PRK11202.1"/>
    <property type="match status" value="1"/>
</dbReference>
<dbReference type="PANTHER" id="PTHR47752">
    <property type="entry name" value="HTH-TYPE TRANSCRIPTIONAL REPRESSOR FABR"/>
    <property type="match status" value="1"/>
</dbReference>
<dbReference type="PANTHER" id="PTHR47752:SF1">
    <property type="entry name" value="HTH-TYPE TRANSCRIPTIONAL REPRESSOR FABR"/>
    <property type="match status" value="1"/>
</dbReference>
<dbReference type="Pfam" id="PF21943">
    <property type="entry name" value="TetR_C_46"/>
    <property type="match status" value="1"/>
</dbReference>
<dbReference type="Pfam" id="PF00440">
    <property type="entry name" value="TetR_N"/>
    <property type="match status" value="1"/>
</dbReference>
<dbReference type="SUPFAM" id="SSF46689">
    <property type="entry name" value="Homeodomain-like"/>
    <property type="match status" value="1"/>
</dbReference>
<dbReference type="PROSITE" id="PS50977">
    <property type="entry name" value="HTH_TETR_2"/>
    <property type="match status" value="1"/>
</dbReference>
<proteinExistence type="inferred from homology"/>
<protein>
    <recommendedName>
        <fullName evidence="1">HTH-type transcriptional repressor FabR</fullName>
    </recommendedName>
</protein>
<organism>
    <name type="scientific">Shigella sonnei (strain Ss046)</name>
    <dbReference type="NCBI Taxonomy" id="300269"/>
    <lineage>
        <taxon>Bacteria</taxon>
        <taxon>Pseudomonadati</taxon>
        <taxon>Pseudomonadota</taxon>
        <taxon>Gammaproteobacteria</taxon>
        <taxon>Enterobacterales</taxon>
        <taxon>Enterobacteriaceae</taxon>
        <taxon>Shigella</taxon>
    </lineage>
</organism>
<accession>Q3YV13</accession>
<gene>
    <name evidence="1" type="primary">fabR</name>
    <name type="ordered locus">SSON_4136</name>
</gene>
<name>FABR_SHISS</name>
<feature type="chain" id="PRO_0000293577" description="HTH-type transcriptional repressor FabR">
    <location>
        <begin position="1"/>
        <end position="215"/>
    </location>
</feature>
<feature type="domain" description="HTH tetR-type" evidence="1">
    <location>
        <begin position="10"/>
        <end position="70"/>
    </location>
</feature>
<feature type="DNA-binding region" description="H-T-H motif" evidence="1">
    <location>
        <begin position="33"/>
        <end position="52"/>
    </location>
</feature>
<sequence length="215" mass="24418">MGIRAQQKEKTRRSLVEAAFSQLSAERSFASLSLREVAREAGIAPTSFYRHFRDVDELGLTMVDESGLMLRQLMRQARQRIAKGGSVIRTSVSTFMEFIGNNPNAFRLLLRERSGTSAAFRAAVAREIQHFIAELADYLELENHMPRAFTEAQAEAMVTIVFSAGAEALDVGVEQRRQLEERLVLQLRMISKGAYYWYRREQEKTAIIPGNVKDE</sequence>
<comment type="function">
    <text evidence="1">Represses the transcription of fabB, involved in unsaturated fatty acid (UFA) biosynthesis. By controlling UFA production, FabR directly influences the physical properties of the membrane bilayer.</text>
</comment>
<comment type="subunit">
    <text evidence="1">Homodimer.</text>
</comment>
<comment type="subcellular location">
    <subcellularLocation>
        <location evidence="1">Cytoplasm</location>
    </subcellularLocation>
</comment>
<comment type="sequence caution" evidence="2">
    <conflict type="erroneous initiation">
        <sequence resource="EMBL-CDS" id="AAZ90649"/>
    </conflict>
</comment>
<evidence type="ECO:0000255" key="1">
    <source>
        <dbReference type="HAMAP-Rule" id="MF_01190"/>
    </source>
</evidence>
<evidence type="ECO:0000305" key="2"/>